<sequence length="249" mass="27960">MRYVIITGTSQGLGEAIATQLLEESTTVISISRRENKELTKLAEQYNSNCIFHSLDLQDVHNLETNFKEIISSIKEDNVSSIHLINNAGTVAPMKPIEKAESEQFITNVHINLLAPMILTSTFMKHTKEWKVDKRVINISSGAGKNPYFGWGAYCTTKAGVNMFTQCVATEEVEKEYPVKIVAFAPGVVDTNMQAQIRETAKEDFTNLDRFIALKEEGKLLSPEYVAKAIRNLLETEEFPQGEVIRIDE</sequence>
<proteinExistence type="evidence at protein level"/>
<organism>
    <name type="scientific">Bacillus cereus</name>
    <dbReference type="NCBI Taxonomy" id="1396"/>
    <lineage>
        <taxon>Bacteria</taxon>
        <taxon>Bacillati</taxon>
        <taxon>Bacillota</taxon>
        <taxon>Bacilli</taxon>
        <taxon>Bacillales</taxon>
        <taxon>Bacillaceae</taxon>
        <taxon>Bacillus</taxon>
        <taxon>Bacillus cereus group</taxon>
    </lineage>
</organism>
<evidence type="ECO:0000250" key="1">
    <source>
        <dbReference type="UniProtKB" id="L0E2Z4"/>
    </source>
</evidence>
<evidence type="ECO:0000250" key="2">
    <source>
        <dbReference type="UniProtKB" id="O93868"/>
    </source>
</evidence>
<evidence type="ECO:0000255" key="3">
    <source>
        <dbReference type="PROSITE-ProRule" id="PRU10001"/>
    </source>
</evidence>
<evidence type="ECO:0000269" key="4">
    <source>
    </source>
</evidence>
<evidence type="ECO:0000269" key="5">
    <source>
    </source>
</evidence>
<evidence type="ECO:0000305" key="6"/>
<evidence type="ECO:0000312" key="7">
    <source>
        <dbReference type="EMBL" id="BAB86001.1"/>
    </source>
</evidence>
<evidence type="ECO:0000312" key="8">
    <source>
        <dbReference type="EMBL" id="BAB86009.1"/>
    </source>
</evidence>
<feature type="chain" id="PRO_0000366975" description="Benzil reductase ((S)-benzoin forming)">
    <location>
        <begin position="1"/>
        <end position="249"/>
    </location>
</feature>
<feature type="active site" description="Proton acceptor" evidence="3">
    <location>
        <position position="154"/>
    </location>
</feature>
<feature type="binding site" evidence="1">
    <location>
        <position position="6"/>
    </location>
    <ligand>
        <name>NADP(+)</name>
        <dbReference type="ChEBI" id="CHEBI:58349"/>
    </ligand>
</feature>
<feature type="binding site" evidence="2">
    <location>
        <position position="87"/>
    </location>
    <ligand>
        <name>NADP(+)</name>
        <dbReference type="ChEBI" id="CHEBI:58349"/>
    </ligand>
</feature>
<feature type="binding site" evidence="2">
    <location>
        <position position="154"/>
    </location>
    <ligand>
        <name>NADP(+)</name>
        <dbReference type="ChEBI" id="CHEBI:58349"/>
    </ligand>
</feature>
<feature type="binding site" evidence="2">
    <location>
        <position position="158"/>
    </location>
    <ligand>
        <name>NADP(+)</name>
        <dbReference type="ChEBI" id="CHEBI:58349"/>
    </ligand>
</feature>
<feature type="binding site" evidence="2">
    <location>
        <position position="189"/>
    </location>
    <ligand>
        <name>NADP(+)</name>
        <dbReference type="ChEBI" id="CHEBI:58349"/>
    </ligand>
</feature>
<feature type="binding site" evidence="1">
    <location>
        <position position="191"/>
    </location>
    <ligand>
        <name>NADP(+)</name>
        <dbReference type="ChEBI" id="CHEBI:58349"/>
    </ligand>
</feature>
<name>BZRD_BACCE</name>
<keyword id="KW-0963">Cytoplasm</keyword>
<keyword id="KW-0521">NADP</keyword>
<keyword id="KW-0560">Oxidoreductase</keyword>
<comment type="function">
    <text evidence="4 5">Reduces benzil stereospecifically to (S)-benzoin (PubMed:11745140, PubMed:11796169). Can also reduce 1-phenyl-1,2-propanedione, 1,4-naphthoquinone, 1-(4-methyl-phenyl)-2-phenyl-ethane-1,2-dione, 1-(4-fluoro-phenyl)-2-phenyl-ethane-1,2-dione, methyl benzoylformate and p-nitrobenzaldehyde in decreasing order (PubMed:11796169).</text>
</comment>
<comment type="catalytic activity">
    <reaction evidence="4 5">
        <text>(S)-benzoin + NADP(+) = benzil + NADPH + H(+)</text>
        <dbReference type="Rhea" id="RHEA:25968"/>
        <dbReference type="ChEBI" id="CHEBI:15378"/>
        <dbReference type="ChEBI" id="CHEBI:51507"/>
        <dbReference type="ChEBI" id="CHEBI:51510"/>
        <dbReference type="ChEBI" id="CHEBI:57783"/>
        <dbReference type="ChEBI" id="CHEBI:58349"/>
        <dbReference type="EC" id="1.1.1.320"/>
    </reaction>
</comment>
<comment type="catalytic activity">
    <reaction evidence="5">
        <text>2-hydroxy-1-phenyl-1-propanone + NADP(+) = 1-phenyl-1,2-propanedione + NADPH + H(+)</text>
        <dbReference type="Rhea" id="RHEA:31891"/>
        <dbReference type="ChEBI" id="CHEBI:15378"/>
        <dbReference type="ChEBI" id="CHEBI:57783"/>
        <dbReference type="ChEBI" id="CHEBI:58349"/>
        <dbReference type="ChEBI" id="CHEBI:63552"/>
        <dbReference type="ChEBI" id="CHEBI:63553"/>
        <dbReference type="EC" id="1.1.1.320"/>
    </reaction>
</comment>
<comment type="activity regulation">
    <text evidence="5">Inhibited by Cibacron blue 3GA, a general SDR family inhibitor.</text>
</comment>
<comment type="biophysicochemical properties">
    <kinetics>
        <KM evidence="5">768 uM for benzil (with NADPH at 37 degrees Celsius and pH 6.5)</KM>
        <KM evidence="5">42 uM for 1-phenyl-1,2-propanedione (with NADPH at 37 degrees Celsius and pH 6.5)</KM>
        <KM evidence="5">27.6 uM for 1,4-naphthoquinone (with NADPH at 37 degrees Celsius and pH 6.5)</KM>
        <KM evidence="5">261 uM for p-nitrobenzaldehyde (with NADPH and at 37 degrees Celsius and pH 6.5)</KM>
        <KM evidence="5">584 uM for 1-(4-fluoro-phenyl)-2-phenyl-ethane-1,2-dione (with NADPH at 37 degrees Celsius and pH 6.5)</KM>
        <KM evidence="5">611 uM for 1-(4-methyl-phenyl)-2-phenyl-ethane-1,2-dione (with NADPH at 37 degrees Celsius and pH 6.5)</KM>
        <KM evidence="5">1400 uM for methyl benzoylformate (with NADPH and at 37 degrees Celsius and pH 6.5)</KM>
        <text evidence="5">kcat is 64.4 min(-1) with benzil as substrate. kcat is 165 min(-1) with 1-phenyl-1,2-propanedione as substrate. kcat is 7.4 min(-1) with 1,4-naphthoquinone as substrate. kcat is 1.2 min(-1) with p-nitrobenzaldehyde as substrate. kcat is 31.9 min(-1) with 1-(4-fluoro-phenyl)-2-phenyl-ethane-1,2-dione as substrate. kcat is 37.9 min(-1) with 1-(4-methyl-phenyl)-2-phenyl-ethane-1,2-dione as substrate. kcat is 16.7 min(-1) with methyl benzoylformate as substrate.</text>
    </kinetics>
    <phDependence>
        <text evidence="5">Optimum pH is 6.0-8.0.</text>
    </phDependence>
    <temperatureDependence>
        <text evidence="5">Optimum temperature is 50 degrees Celsius (at pH 6.5).</text>
    </temperatureDependence>
</comment>
<comment type="subcellular location">
    <subcellularLocation>
        <location evidence="5">Cytoplasm</location>
    </subcellularLocation>
</comment>
<comment type="similarity">
    <text evidence="6">Belongs to the short-chain dehydrogenases/reductases (SDR) family.</text>
</comment>
<gene>
    <name evidence="7 8" type="primary">yueD</name>
</gene>
<dbReference type="EC" id="1.1.1.320" evidence="4 5"/>
<dbReference type="EMBL" id="AB049404">
    <property type="protein sequence ID" value="BAB86001.1"/>
    <property type="molecule type" value="Genomic_DNA"/>
</dbReference>
<dbReference type="EMBL" id="AB052931">
    <property type="protein sequence ID" value="BAB86009.1"/>
    <property type="molecule type" value="Genomic_DNA"/>
</dbReference>
<dbReference type="RefSeq" id="WP_098508431.1">
    <property type="nucleotide sequence ID" value="NZ_NUYT01000014.1"/>
</dbReference>
<dbReference type="SMR" id="Q8RJB2"/>
<dbReference type="KEGG" id="ag:BAB86001"/>
<dbReference type="eggNOG" id="COG1028">
    <property type="taxonomic scope" value="Bacteria"/>
</dbReference>
<dbReference type="BioCyc" id="MetaCyc:MONOMER-17022"/>
<dbReference type="BRENDA" id="1.1.1.320">
    <property type="organism ID" value="648"/>
</dbReference>
<dbReference type="GO" id="GO:0005737">
    <property type="term" value="C:cytoplasm"/>
    <property type="evidence" value="ECO:0007669"/>
    <property type="project" value="UniProtKB-SubCell"/>
</dbReference>
<dbReference type="GO" id="GO:0102306">
    <property type="term" value="F:benzil reductase [(S)-benzoin-forming] activity"/>
    <property type="evidence" value="ECO:0007669"/>
    <property type="project" value="UniProtKB-EC"/>
</dbReference>
<dbReference type="GO" id="GO:0004757">
    <property type="term" value="F:sepiapterin reductase (NADP+) activity"/>
    <property type="evidence" value="ECO:0007669"/>
    <property type="project" value="TreeGrafter"/>
</dbReference>
<dbReference type="GO" id="GO:0006729">
    <property type="term" value="P:tetrahydrobiopterin biosynthetic process"/>
    <property type="evidence" value="ECO:0007669"/>
    <property type="project" value="TreeGrafter"/>
</dbReference>
<dbReference type="CDD" id="cd05367">
    <property type="entry name" value="SPR-like_SDR_c"/>
    <property type="match status" value="1"/>
</dbReference>
<dbReference type="FunFam" id="3.40.50.720:FF:000441">
    <property type="entry name" value="Oxidoreductase, short-chain dehydrogenase/reductase"/>
    <property type="match status" value="1"/>
</dbReference>
<dbReference type="Gene3D" id="3.40.50.720">
    <property type="entry name" value="NAD(P)-binding Rossmann-like Domain"/>
    <property type="match status" value="1"/>
</dbReference>
<dbReference type="InterPro" id="IPR051721">
    <property type="entry name" value="Biopterin_syn/organic_redct"/>
</dbReference>
<dbReference type="InterPro" id="IPR036291">
    <property type="entry name" value="NAD(P)-bd_dom_sf"/>
</dbReference>
<dbReference type="InterPro" id="IPR020904">
    <property type="entry name" value="Sc_DH/Rdtase_CS"/>
</dbReference>
<dbReference type="InterPro" id="IPR002347">
    <property type="entry name" value="SDR_fam"/>
</dbReference>
<dbReference type="NCBIfam" id="NF005381">
    <property type="entry name" value="PRK06924.1"/>
    <property type="match status" value="1"/>
</dbReference>
<dbReference type="PANTHER" id="PTHR44085">
    <property type="entry name" value="SEPIAPTERIN REDUCTASE"/>
    <property type="match status" value="1"/>
</dbReference>
<dbReference type="PANTHER" id="PTHR44085:SF2">
    <property type="entry name" value="SEPIAPTERIN REDUCTASE"/>
    <property type="match status" value="1"/>
</dbReference>
<dbReference type="Pfam" id="PF00106">
    <property type="entry name" value="adh_short"/>
    <property type="match status" value="1"/>
</dbReference>
<dbReference type="PRINTS" id="PR00081">
    <property type="entry name" value="GDHRDH"/>
</dbReference>
<dbReference type="SUPFAM" id="SSF51735">
    <property type="entry name" value="NAD(P)-binding Rossmann-fold domains"/>
    <property type="match status" value="1"/>
</dbReference>
<dbReference type="PROSITE" id="PS00061">
    <property type="entry name" value="ADH_SHORT"/>
    <property type="match status" value="1"/>
</dbReference>
<accession>Q8RJB2</accession>
<reference evidence="7" key="1">
    <citation type="journal article" date="2001" name="Biotechnol. Bioeng.">
        <title>Isolation and expression of a Bacillus cereus gene encoding benzil reductase.</title>
        <authorList>
            <person name="Maruyama R."/>
            <person name="Nishizawa M."/>
            <person name="Itoi Y."/>
            <person name="Ito S."/>
            <person name="Inoue M."/>
        </authorList>
    </citation>
    <scope>NUCLEOTIDE SEQUENCE [GENOMIC DNA]</scope>
    <scope>FUNCTION</scope>
    <scope>CATALYTIC ACTIVITY</scope>
    <source>
        <strain>Tim-r01</strain>
    </source>
</reference>
<reference evidence="8" key="2">
    <citation type="journal article" date="2002" name="J. Biotechnol.">
        <title>The enzymes with benzil reductase activity conserved from bacteria to mammals.</title>
        <authorList>
            <person name="Maruyama R."/>
            <person name="Nishizawa M."/>
            <person name="Itoi Y."/>
            <person name="Ito S."/>
            <person name="Inoue M."/>
        </authorList>
    </citation>
    <scope>NUCLEOTIDE SEQUENCE [GENOMIC DNA]</scope>
    <scope>FUNCTION</scope>
    <scope>CATALYTIC ACTIVITY</scope>
    <scope>SUBSTRATE SPECIFICITY</scope>
    <scope>BIOPHYSICOCHEMICAL PROPERTIES</scope>
    <scope>ACTIVITY REGULATION</scope>
    <scope>SUBCELLULAR LOCATION</scope>
    <source>
        <strain>NBRC 3563</strain>
        <strain>Tim-r01</strain>
    </source>
</reference>
<protein>
    <recommendedName>
        <fullName evidence="6">Benzil reductase ((S)-benzoin forming)</fullName>
        <ecNumber evidence="4 5">1.1.1.320</ecNumber>
    </recommendedName>
</protein>